<keyword id="KW-0028">Amino-acid biosynthesis</keyword>
<keyword id="KW-0055">Arginine biosynthesis</keyword>
<keyword id="KW-0963">Cytoplasm</keyword>
<keyword id="KW-0456">Lyase</keyword>
<comment type="catalytic activity">
    <reaction evidence="1">
        <text>2-(N(omega)-L-arginino)succinate = fumarate + L-arginine</text>
        <dbReference type="Rhea" id="RHEA:24020"/>
        <dbReference type="ChEBI" id="CHEBI:29806"/>
        <dbReference type="ChEBI" id="CHEBI:32682"/>
        <dbReference type="ChEBI" id="CHEBI:57472"/>
        <dbReference type="EC" id="4.3.2.1"/>
    </reaction>
</comment>
<comment type="pathway">
    <text evidence="1">Amino-acid biosynthesis; L-arginine biosynthesis; L-arginine from L-ornithine and carbamoyl phosphate: step 3/3.</text>
</comment>
<comment type="subcellular location">
    <subcellularLocation>
        <location evidence="1">Cytoplasm</location>
    </subcellularLocation>
</comment>
<comment type="similarity">
    <text evidence="1">Belongs to the lyase 1 family. Argininosuccinate lyase subfamily.</text>
</comment>
<evidence type="ECO:0000255" key="1">
    <source>
        <dbReference type="HAMAP-Rule" id="MF_00006"/>
    </source>
</evidence>
<feature type="chain" id="PRO_1000116199" description="Argininosuccinate lyase">
    <location>
        <begin position="1"/>
        <end position="463"/>
    </location>
</feature>
<dbReference type="EC" id="4.3.2.1" evidence="1"/>
<dbReference type="EMBL" id="CP001177">
    <property type="protein sequence ID" value="ACJ78375.1"/>
    <property type="molecule type" value="Genomic_DNA"/>
</dbReference>
<dbReference type="SMR" id="B7HRS6"/>
<dbReference type="KEGG" id="bcr:BCAH187_A4763"/>
<dbReference type="HOGENOM" id="CLU_027272_2_3_9"/>
<dbReference type="UniPathway" id="UPA00068">
    <property type="reaction ID" value="UER00114"/>
</dbReference>
<dbReference type="Proteomes" id="UP000002214">
    <property type="component" value="Chromosome"/>
</dbReference>
<dbReference type="GO" id="GO:0005829">
    <property type="term" value="C:cytosol"/>
    <property type="evidence" value="ECO:0007669"/>
    <property type="project" value="TreeGrafter"/>
</dbReference>
<dbReference type="GO" id="GO:0004056">
    <property type="term" value="F:argininosuccinate lyase activity"/>
    <property type="evidence" value="ECO:0007669"/>
    <property type="project" value="UniProtKB-UniRule"/>
</dbReference>
<dbReference type="GO" id="GO:0042450">
    <property type="term" value="P:arginine biosynthetic process via ornithine"/>
    <property type="evidence" value="ECO:0007669"/>
    <property type="project" value="InterPro"/>
</dbReference>
<dbReference type="GO" id="GO:0006526">
    <property type="term" value="P:L-arginine biosynthetic process"/>
    <property type="evidence" value="ECO:0007669"/>
    <property type="project" value="UniProtKB-UniRule"/>
</dbReference>
<dbReference type="CDD" id="cd01359">
    <property type="entry name" value="Argininosuccinate_lyase"/>
    <property type="match status" value="1"/>
</dbReference>
<dbReference type="FunFam" id="1.10.275.10:FF:000002">
    <property type="entry name" value="Argininosuccinate lyase"/>
    <property type="match status" value="1"/>
</dbReference>
<dbReference type="FunFam" id="1.10.40.30:FF:000001">
    <property type="entry name" value="Argininosuccinate lyase"/>
    <property type="match status" value="1"/>
</dbReference>
<dbReference type="FunFam" id="1.20.200.10:FF:000006">
    <property type="entry name" value="Argininosuccinate lyase"/>
    <property type="match status" value="1"/>
</dbReference>
<dbReference type="Gene3D" id="1.10.40.30">
    <property type="entry name" value="Fumarase/aspartase (C-terminal domain)"/>
    <property type="match status" value="1"/>
</dbReference>
<dbReference type="Gene3D" id="1.20.200.10">
    <property type="entry name" value="Fumarase/aspartase (Central domain)"/>
    <property type="match status" value="1"/>
</dbReference>
<dbReference type="Gene3D" id="1.10.275.10">
    <property type="entry name" value="Fumarase/aspartase (N-terminal domain)"/>
    <property type="match status" value="1"/>
</dbReference>
<dbReference type="HAMAP" id="MF_00006">
    <property type="entry name" value="Arg_succ_lyase"/>
    <property type="match status" value="1"/>
</dbReference>
<dbReference type="InterPro" id="IPR029419">
    <property type="entry name" value="Arg_succ_lyase_C"/>
</dbReference>
<dbReference type="InterPro" id="IPR009049">
    <property type="entry name" value="Argininosuccinate_lyase"/>
</dbReference>
<dbReference type="InterPro" id="IPR024083">
    <property type="entry name" value="Fumarase/histidase_N"/>
</dbReference>
<dbReference type="InterPro" id="IPR020557">
    <property type="entry name" value="Fumarate_lyase_CS"/>
</dbReference>
<dbReference type="InterPro" id="IPR000362">
    <property type="entry name" value="Fumarate_lyase_fam"/>
</dbReference>
<dbReference type="InterPro" id="IPR022761">
    <property type="entry name" value="Fumarate_lyase_N"/>
</dbReference>
<dbReference type="InterPro" id="IPR008948">
    <property type="entry name" value="L-Aspartase-like"/>
</dbReference>
<dbReference type="NCBIfam" id="TIGR00838">
    <property type="entry name" value="argH"/>
    <property type="match status" value="1"/>
</dbReference>
<dbReference type="PANTHER" id="PTHR43814">
    <property type="entry name" value="ARGININOSUCCINATE LYASE"/>
    <property type="match status" value="1"/>
</dbReference>
<dbReference type="PANTHER" id="PTHR43814:SF1">
    <property type="entry name" value="ARGININOSUCCINATE LYASE"/>
    <property type="match status" value="1"/>
</dbReference>
<dbReference type="Pfam" id="PF14698">
    <property type="entry name" value="ASL_C2"/>
    <property type="match status" value="1"/>
</dbReference>
<dbReference type="Pfam" id="PF00206">
    <property type="entry name" value="Lyase_1"/>
    <property type="match status" value="1"/>
</dbReference>
<dbReference type="PRINTS" id="PR00145">
    <property type="entry name" value="ARGSUCLYASE"/>
</dbReference>
<dbReference type="PRINTS" id="PR00149">
    <property type="entry name" value="FUMRATELYASE"/>
</dbReference>
<dbReference type="SUPFAM" id="SSF48557">
    <property type="entry name" value="L-aspartase-like"/>
    <property type="match status" value="1"/>
</dbReference>
<dbReference type="PROSITE" id="PS00163">
    <property type="entry name" value="FUMARATE_LYASES"/>
    <property type="match status" value="1"/>
</dbReference>
<sequence length="463" mass="52226">MSKLWGGRFTEEAEAWVEEFGASISFDQQLVNQDINGSIAHVTMLAKQGIVTKEEAEKIKIGLQYLLEEAKQNKLHFSVEAEDIHLNIEKMLIEKIGEVGGKLHTGRSRNDQVATDMHLYLNEKVEHIIKATKQLQTVLVHQAENNIETIMPGYTHLQRAQPISFAHHILAYFWMLERDVNRYEDSLKRINISPLGAGALAGTTFPIDREYSAELLGFNGIYENSLDAVSDRDFILEFLSNSSMLMMHLSRFCEELILWSSQEFQFIEMSDQYATGSSIMPQKKNPDMAELIRGKTGRVYGNLFSLLTVMKGLPLAYNKDLQEDKEGMFDTVKTVEGCLHIMAGMLETMTVNKEKMGQAVTQDFSNATEIADYLANKGLPFRQAHEIVGKLVLHCTQKGIYLVDVPLETYKEMSSLFEEDLYEVLSPYAAVKRRNSAGGTGFEQIEKALEKAKGLVGEFVGIK</sequence>
<accession>B7HRS6</accession>
<name>ARLY_BACC7</name>
<proteinExistence type="inferred from homology"/>
<protein>
    <recommendedName>
        <fullName evidence="1">Argininosuccinate lyase</fullName>
        <shortName evidence="1">ASAL</shortName>
        <ecNumber evidence="1">4.3.2.1</ecNumber>
    </recommendedName>
    <alternativeName>
        <fullName evidence="1">Arginosuccinase</fullName>
    </alternativeName>
</protein>
<gene>
    <name evidence="1" type="primary">argH</name>
    <name type="ordered locus">BCAH187_A4763</name>
</gene>
<organism>
    <name type="scientific">Bacillus cereus (strain AH187)</name>
    <dbReference type="NCBI Taxonomy" id="405534"/>
    <lineage>
        <taxon>Bacteria</taxon>
        <taxon>Bacillati</taxon>
        <taxon>Bacillota</taxon>
        <taxon>Bacilli</taxon>
        <taxon>Bacillales</taxon>
        <taxon>Bacillaceae</taxon>
        <taxon>Bacillus</taxon>
        <taxon>Bacillus cereus group</taxon>
    </lineage>
</organism>
<reference key="1">
    <citation type="submission" date="2008-10" db="EMBL/GenBank/DDBJ databases">
        <title>Genome sequence of Bacillus cereus AH187.</title>
        <authorList>
            <person name="Dodson R.J."/>
            <person name="Durkin A.S."/>
            <person name="Rosovitz M.J."/>
            <person name="Rasko D.A."/>
            <person name="Kolsto A.B."/>
            <person name="Okstad O.A."/>
            <person name="Ravel J."/>
            <person name="Sutton G."/>
        </authorList>
    </citation>
    <scope>NUCLEOTIDE SEQUENCE [LARGE SCALE GENOMIC DNA]</scope>
    <source>
        <strain>AH187</strain>
    </source>
</reference>